<feature type="chain" id="PRO_0000355880" description="Large ribosomal subunit protein uL14c">
    <location>
        <begin position="1"/>
        <end position="122"/>
    </location>
</feature>
<keyword id="KW-0150">Chloroplast</keyword>
<keyword id="KW-0934">Plastid</keyword>
<keyword id="KW-0687">Ribonucleoprotein</keyword>
<keyword id="KW-0689">Ribosomal protein</keyword>
<keyword id="KW-0694">RNA-binding</keyword>
<keyword id="KW-0699">rRNA-binding</keyword>
<reference key="1">
    <citation type="journal article" date="2007" name="Mol. Biol. Evol.">
        <title>Chloroplast genome (cpDNA) of Cycas taitungensis and 56 cp protein-coding genes of Gnetum parvifolium: insights into cpDNA evolution and phylogeny of extant seed plants.</title>
        <authorList>
            <person name="Wu C.-S."/>
            <person name="Wang Y.-N."/>
            <person name="Liu S.-M."/>
            <person name="Chaw S.-M."/>
        </authorList>
    </citation>
    <scope>NUCLEOTIDE SEQUENCE [LARGE SCALE GENOMIC DNA]</scope>
</reference>
<reference key="2">
    <citation type="journal article" date="2009" name="Mol. Phylogenet. Evol.">
        <title>Evolution of reduced and compact chloroplast genomes (cpDNAs) in gnetophytes: Selection toward a lower-cost strategy.</title>
        <authorList>
            <person name="Wu C.-S."/>
            <person name="Lai Y.-T."/>
            <person name="Lin C.-P."/>
            <person name="Wang Y.-N."/>
            <person name="Chaw S.-M."/>
        </authorList>
    </citation>
    <scope>NUCLEOTIDE SEQUENCE [LARGE SCALE GENOMIC DNA]</scope>
</reference>
<dbReference type="EMBL" id="AB295940">
    <property type="protein sequence ID" value="BAF64889.1"/>
    <property type="molecule type" value="Genomic_DNA"/>
</dbReference>
<dbReference type="EMBL" id="AP009569">
    <property type="protein sequence ID" value="BAH11258.1"/>
    <property type="molecule type" value="Genomic_DNA"/>
</dbReference>
<dbReference type="RefSeq" id="YP_002519748.1">
    <property type="nucleotide sequence ID" value="NC_011942.1"/>
</dbReference>
<dbReference type="SMR" id="A6BM44"/>
<dbReference type="GeneID" id="7368187"/>
<dbReference type="GO" id="GO:0009507">
    <property type="term" value="C:chloroplast"/>
    <property type="evidence" value="ECO:0007669"/>
    <property type="project" value="UniProtKB-SubCell"/>
</dbReference>
<dbReference type="GO" id="GO:0022625">
    <property type="term" value="C:cytosolic large ribosomal subunit"/>
    <property type="evidence" value="ECO:0007669"/>
    <property type="project" value="TreeGrafter"/>
</dbReference>
<dbReference type="GO" id="GO:0070180">
    <property type="term" value="F:large ribosomal subunit rRNA binding"/>
    <property type="evidence" value="ECO:0007669"/>
    <property type="project" value="TreeGrafter"/>
</dbReference>
<dbReference type="GO" id="GO:0003735">
    <property type="term" value="F:structural constituent of ribosome"/>
    <property type="evidence" value="ECO:0007669"/>
    <property type="project" value="InterPro"/>
</dbReference>
<dbReference type="GO" id="GO:0006412">
    <property type="term" value="P:translation"/>
    <property type="evidence" value="ECO:0007669"/>
    <property type="project" value="UniProtKB-UniRule"/>
</dbReference>
<dbReference type="CDD" id="cd00337">
    <property type="entry name" value="Ribosomal_uL14"/>
    <property type="match status" value="1"/>
</dbReference>
<dbReference type="FunFam" id="2.40.150.20:FF:000021">
    <property type="entry name" value="Ribosomal protein L14"/>
    <property type="match status" value="1"/>
</dbReference>
<dbReference type="Gene3D" id="2.40.150.20">
    <property type="entry name" value="Ribosomal protein L14"/>
    <property type="match status" value="1"/>
</dbReference>
<dbReference type="HAMAP" id="MF_01367">
    <property type="entry name" value="Ribosomal_uL14"/>
    <property type="match status" value="1"/>
</dbReference>
<dbReference type="InterPro" id="IPR000218">
    <property type="entry name" value="Ribosomal_uL14"/>
</dbReference>
<dbReference type="InterPro" id="IPR005745">
    <property type="entry name" value="Ribosomal_uL14_bac-type"/>
</dbReference>
<dbReference type="InterPro" id="IPR036853">
    <property type="entry name" value="Ribosomal_uL14_sf"/>
</dbReference>
<dbReference type="NCBIfam" id="TIGR01067">
    <property type="entry name" value="rplN_bact"/>
    <property type="match status" value="1"/>
</dbReference>
<dbReference type="PANTHER" id="PTHR11761">
    <property type="entry name" value="50S/60S RIBOSOMAL PROTEIN L14/L23"/>
    <property type="match status" value="1"/>
</dbReference>
<dbReference type="PANTHER" id="PTHR11761:SF3">
    <property type="entry name" value="LARGE RIBOSOMAL SUBUNIT PROTEIN UL14M"/>
    <property type="match status" value="1"/>
</dbReference>
<dbReference type="Pfam" id="PF00238">
    <property type="entry name" value="Ribosomal_L14"/>
    <property type="match status" value="1"/>
</dbReference>
<dbReference type="SMART" id="SM01374">
    <property type="entry name" value="Ribosomal_L14"/>
    <property type="match status" value="1"/>
</dbReference>
<dbReference type="SUPFAM" id="SSF50193">
    <property type="entry name" value="Ribosomal protein L14"/>
    <property type="match status" value="1"/>
</dbReference>
<geneLocation type="chloroplast"/>
<name>RK14_GNEPA</name>
<protein>
    <recommendedName>
        <fullName evidence="1">Large ribosomal subunit protein uL14c</fullName>
    </recommendedName>
    <alternativeName>
        <fullName evidence="2">50S ribosomal protein L14, chloroplastic</fullName>
    </alternativeName>
</protein>
<accession>A6BM44</accession>
<accession>B7ZI78</accession>
<gene>
    <name evidence="1" type="primary">rpl14</name>
</gene>
<organism>
    <name type="scientific">Gnetum parvifolium</name>
    <name type="common">Small-leaved jointfir</name>
    <name type="synonym">Gnetum scandens var. parvifolium</name>
    <dbReference type="NCBI Taxonomy" id="33153"/>
    <lineage>
        <taxon>Eukaryota</taxon>
        <taxon>Viridiplantae</taxon>
        <taxon>Streptophyta</taxon>
        <taxon>Embryophyta</taxon>
        <taxon>Tracheophyta</taxon>
        <taxon>Spermatophyta</taxon>
        <taxon>Gnetopsida</taxon>
        <taxon>Gnetidae</taxon>
        <taxon>Gnetales</taxon>
        <taxon>Gnetaceae</taxon>
        <taxon>Gnetum</taxon>
    </lineage>
</organism>
<proteinExistence type="inferred from homology"/>
<sequence length="122" mass="13812">MIQSQTFLNIADNSGARKIMCIRVVGTTYQKYAYIGDIIIAIIKEVVPNTKMEKSEIVRAVVIRTSKEFQRDDGMRIRSDDNAAIIIDQKGNPKGTRVFGPVLQELRQWNFTKIISLAPEVL</sequence>
<evidence type="ECO:0000255" key="1">
    <source>
        <dbReference type="HAMAP-Rule" id="MF_01367"/>
    </source>
</evidence>
<evidence type="ECO:0000305" key="2"/>
<comment type="function">
    <text evidence="1">Binds to 23S rRNA.</text>
</comment>
<comment type="subunit">
    <text evidence="1">Part of the 50S ribosomal subunit.</text>
</comment>
<comment type="subcellular location">
    <subcellularLocation>
        <location>Plastid</location>
        <location>Chloroplast</location>
    </subcellularLocation>
</comment>
<comment type="similarity">
    <text evidence="1">Belongs to the universal ribosomal protein uL14 family.</text>
</comment>